<name>KDSA_FRATH</name>
<organism>
    <name type="scientific">Francisella tularensis subsp. holarctica (strain LVS)</name>
    <dbReference type="NCBI Taxonomy" id="376619"/>
    <lineage>
        <taxon>Bacteria</taxon>
        <taxon>Pseudomonadati</taxon>
        <taxon>Pseudomonadota</taxon>
        <taxon>Gammaproteobacteria</taxon>
        <taxon>Thiotrichales</taxon>
        <taxon>Francisellaceae</taxon>
        <taxon>Francisella</taxon>
    </lineage>
</organism>
<sequence>MKIANFEVGNGKPFFLMSGPCVIESEQMAMDTAGYLAEVTKDLGINFVYKSSFDKANRSSINSFRGLGVDKGLEILAKVKKTYNVPVVTDVHEDTPFAEVAEVVDVLQIPAFLCRQTNFILEVCKQGKPVNIKKGQFLAPWDMQHVVTKAKSTGNEQIMVCERGVSFGYNNLVSDMRSLEIMKATGCPVVFDATHSVQLPGGQGSSSGGQREFVPVLSKAAMAVGIDGLFMETHPNPDEAKSDGPNSFPMYKIKEFLSLLKELDHLVKSQPKTEL</sequence>
<feature type="chain" id="PRO_1000117780" description="2-dehydro-3-deoxyphosphooctonate aldolase">
    <location>
        <begin position="1"/>
        <end position="275"/>
    </location>
</feature>
<accession>Q2A271</accession>
<protein>
    <recommendedName>
        <fullName evidence="1">2-dehydro-3-deoxyphosphooctonate aldolase</fullName>
        <ecNumber evidence="1">2.5.1.55</ecNumber>
    </recommendedName>
    <alternativeName>
        <fullName evidence="1">3-deoxy-D-manno-octulosonic acid 8-phosphate synthase</fullName>
    </alternativeName>
    <alternativeName>
        <fullName evidence="1">KDO-8-phosphate synthase</fullName>
        <shortName evidence="1">KDO 8-P synthase</shortName>
        <shortName evidence="1">KDOPS</shortName>
    </alternativeName>
    <alternativeName>
        <fullName evidence="1">Phospho-2-dehydro-3-deoxyoctonate aldolase</fullName>
    </alternativeName>
</protein>
<dbReference type="EC" id="2.5.1.55" evidence="1"/>
<dbReference type="EMBL" id="AM233362">
    <property type="protein sequence ID" value="CAJ79974.1"/>
    <property type="molecule type" value="Genomic_DNA"/>
</dbReference>
<dbReference type="RefSeq" id="WP_010031164.1">
    <property type="nucleotide sequence ID" value="NZ_CP009694.1"/>
</dbReference>
<dbReference type="SMR" id="Q2A271"/>
<dbReference type="KEGG" id="ftl:FTL_1535"/>
<dbReference type="UniPathway" id="UPA00030"/>
<dbReference type="UniPathway" id="UPA00357">
    <property type="reaction ID" value="UER00474"/>
</dbReference>
<dbReference type="Proteomes" id="UP000001944">
    <property type="component" value="Chromosome"/>
</dbReference>
<dbReference type="GO" id="GO:0005737">
    <property type="term" value="C:cytoplasm"/>
    <property type="evidence" value="ECO:0007669"/>
    <property type="project" value="UniProtKB-SubCell"/>
</dbReference>
<dbReference type="GO" id="GO:0008676">
    <property type="term" value="F:3-deoxy-8-phosphooctulonate synthase activity"/>
    <property type="evidence" value="ECO:0007669"/>
    <property type="project" value="UniProtKB-UniRule"/>
</dbReference>
<dbReference type="GO" id="GO:0019294">
    <property type="term" value="P:keto-3-deoxy-D-manno-octulosonic acid biosynthetic process"/>
    <property type="evidence" value="ECO:0007669"/>
    <property type="project" value="UniProtKB-UniRule"/>
</dbReference>
<dbReference type="Gene3D" id="3.20.20.70">
    <property type="entry name" value="Aldolase class I"/>
    <property type="match status" value="1"/>
</dbReference>
<dbReference type="HAMAP" id="MF_00056">
    <property type="entry name" value="KDO8P_synth"/>
    <property type="match status" value="1"/>
</dbReference>
<dbReference type="InterPro" id="IPR013785">
    <property type="entry name" value="Aldolase_TIM"/>
</dbReference>
<dbReference type="InterPro" id="IPR006218">
    <property type="entry name" value="DAHP1/KDSA"/>
</dbReference>
<dbReference type="InterPro" id="IPR006269">
    <property type="entry name" value="KDO8P_synthase"/>
</dbReference>
<dbReference type="NCBIfam" id="TIGR01362">
    <property type="entry name" value="KDO8P_synth"/>
    <property type="match status" value="1"/>
</dbReference>
<dbReference type="NCBIfam" id="NF003543">
    <property type="entry name" value="PRK05198.1"/>
    <property type="match status" value="1"/>
</dbReference>
<dbReference type="PANTHER" id="PTHR21057">
    <property type="entry name" value="PHOSPHO-2-DEHYDRO-3-DEOXYHEPTONATE ALDOLASE"/>
    <property type="match status" value="1"/>
</dbReference>
<dbReference type="Pfam" id="PF00793">
    <property type="entry name" value="DAHP_synth_1"/>
    <property type="match status" value="1"/>
</dbReference>
<dbReference type="SUPFAM" id="SSF51569">
    <property type="entry name" value="Aldolase"/>
    <property type="match status" value="1"/>
</dbReference>
<reference key="1">
    <citation type="submission" date="2006-03" db="EMBL/GenBank/DDBJ databases">
        <title>Complete genome sequence of Francisella tularensis LVS (Live Vaccine Strain).</title>
        <authorList>
            <person name="Chain P."/>
            <person name="Larimer F."/>
            <person name="Land M."/>
            <person name="Stilwagen S."/>
            <person name="Larsson P."/>
            <person name="Bearden S."/>
            <person name="Chu M."/>
            <person name="Oyston P."/>
            <person name="Forsman M."/>
            <person name="Andersson S."/>
            <person name="Lindler L."/>
            <person name="Titball R."/>
            <person name="Garcia E."/>
        </authorList>
    </citation>
    <scope>NUCLEOTIDE SEQUENCE [LARGE SCALE GENOMIC DNA]</scope>
    <source>
        <strain>LVS</strain>
    </source>
</reference>
<evidence type="ECO:0000255" key="1">
    <source>
        <dbReference type="HAMAP-Rule" id="MF_00056"/>
    </source>
</evidence>
<gene>
    <name evidence="1" type="primary">kdsA</name>
    <name type="ordered locus">FTL_1535</name>
</gene>
<keyword id="KW-0963">Cytoplasm</keyword>
<keyword id="KW-0448">Lipopolysaccharide biosynthesis</keyword>
<keyword id="KW-1185">Reference proteome</keyword>
<keyword id="KW-0808">Transferase</keyword>
<comment type="catalytic activity">
    <reaction evidence="1">
        <text>D-arabinose 5-phosphate + phosphoenolpyruvate + H2O = 3-deoxy-alpha-D-manno-2-octulosonate-8-phosphate + phosphate</text>
        <dbReference type="Rhea" id="RHEA:14053"/>
        <dbReference type="ChEBI" id="CHEBI:15377"/>
        <dbReference type="ChEBI" id="CHEBI:43474"/>
        <dbReference type="ChEBI" id="CHEBI:57693"/>
        <dbReference type="ChEBI" id="CHEBI:58702"/>
        <dbReference type="ChEBI" id="CHEBI:85985"/>
        <dbReference type="EC" id="2.5.1.55"/>
    </reaction>
</comment>
<comment type="pathway">
    <text evidence="1">Carbohydrate biosynthesis; 3-deoxy-D-manno-octulosonate biosynthesis; 3-deoxy-D-manno-octulosonate from D-ribulose 5-phosphate: step 2/3.</text>
</comment>
<comment type="pathway">
    <text evidence="1">Bacterial outer membrane biogenesis; lipopolysaccharide biosynthesis.</text>
</comment>
<comment type="subcellular location">
    <subcellularLocation>
        <location evidence="1">Cytoplasm</location>
    </subcellularLocation>
</comment>
<comment type="similarity">
    <text evidence="1">Belongs to the KdsA family.</text>
</comment>
<proteinExistence type="inferred from homology"/>